<accession>B3EPD4</accession>
<proteinExistence type="inferred from homology"/>
<keyword id="KW-0028">Amino-acid biosynthesis</keyword>
<keyword id="KW-0963">Cytoplasm</keyword>
<keyword id="KW-0521">NADP</keyword>
<keyword id="KW-0560">Oxidoreductase</keyword>
<keyword id="KW-0641">Proline biosynthesis</keyword>
<dbReference type="EC" id="1.2.1.41" evidence="1"/>
<dbReference type="EMBL" id="CP001101">
    <property type="protein sequence ID" value="ACE03812.1"/>
    <property type="molecule type" value="Genomic_DNA"/>
</dbReference>
<dbReference type="SMR" id="B3EPD4"/>
<dbReference type="STRING" id="331678.Cphamn1_0861"/>
<dbReference type="KEGG" id="cpb:Cphamn1_0861"/>
<dbReference type="eggNOG" id="COG0014">
    <property type="taxonomic scope" value="Bacteria"/>
</dbReference>
<dbReference type="HOGENOM" id="CLU_030231_0_0_10"/>
<dbReference type="OrthoDB" id="9809970at2"/>
<dbReference type="UniPathway" id="UPA00098">
    <property type="reaction ID" value="UER00360"/>
</dbReference>
<dbReference type="GO" id="GO:0005737">
    <property type="term" value="C:cytoplasm"/>
    <property type="evidence" value="ECO:0007669"/>
    <property type="project" value="UniProtKB-SubCell"/>
</dbReference>
<dbReference type="GO" id="GO:0004350">
    <property type="term" value="F:glutamate-5-semialdehyde dehydrogenase activity"/>
    <property type="evidence" value="ECO:0007669"/>
    <property type="project" value="UniProtKB-UniRule"/>
</dbReference>
<dbReference type="GO" id="GO:0050661">
    <property type="term" value="F:NADP binding"/>
    <property type="evidence" value="ECO:0007669"/>
    <property type="project" value="InterPro"/>
</dbReference>
<dbReference type="GO" id="GO:0055129">
    <property type="term" value="P:L-proline biosynthetic process"/>
    <property type="evidence" value="ECO:0007669"/>
    <property type="project" value="UniProtKB-UniRule"/>
</dbReference>
<dbReference type="CDD" id="cd07079">
    <property type="entry name" value="ALDH_F18-19_ProA-GPR"/>
    <property type="match status" value="1"/>
</dbReference>
<dbReference type="Gene3D" id="3.40.605.10">
    <property type="entry name" value="Aldehyde Dehydrogenase, Chain A, domain 1"/>
    <property type="match status" value="1"/>
</dbReference>
<dbReference type="Gene3D" id="3.40.309.10">
    <property type="entry name" value="Aldehyde Dehydrogenase, Chain A, domain 2"/>
    <property type="match status" value="1"/>
</dbReference>
<dbReference type="HAMAP" id="MF_00412">
    <property type="entry name" value="ProA"/>
    <property type="match status" value="1"/>
</dbReference>
<dbReference type="InterPro" id="IPR016161">
    <property type="entry name" value="Ald_DH/histidinol_DH"/>
</dbReference>
<dbReference type="InterPro" id="IPR016163">
    <property type="entry name" value="Ald_DH_C"/>
</dbReference>
<dbReference type="InterPro" id="IPR016162">
    <property type="entry name" value="Ald_DH_N"/>
</dbReference>
<dbReference type="InterPro" id="IPR020593">
    <property type="entry name" value="G-glutamylP_reductase_CS"/>
</dbReference>
<dbReference type="InterPro" id="IPR012134">
    <property type="entry name" value="Glu-5-SA_DH"/>
</dbReference>
<dbReference type="InterPro" id="IPR000965">
    <property type="entry name" value="GPR_dom"/>
</dbReference>
<dbReference type="NCBIfam" id="NF001221">
    <property type="entry name" value="PRK00197.1"/>
    <property type="match status" value="1"/>
</dbReference>
<dbReference type="NCBIfam" id="TIGR00407">
    <property type="entry name" value="proA"/>
    <property type="match status" value="1"/>
</dbReference>
<dbReference type="PANTHER" id="PTHR11063:SF8">
    <property type="entry name" value="DELTA-1-PYRROLINE-5-CARBOXYLATE SYNTHASE"/>
    <property type="match status" value="1"/>
</dbReference>
<dbReference type="PANTHER" id="PTHR11063">
    <property type="entry name" value="GLUTAMATE SEMIALDEHYDE DEHYDROGENASE"/>
    <property type="match status" value="1"/>
</dbReference>
<dbReference type="PIRSF" id="PIRSF000151">
    <property type="entry name" value="GPR"/>
    <property type="match status" value="1"/>
</dbReference>
<dbReference type="SUPFAM" id="SSF53720">
    <property type="entry name" value="ALDH-like"/>
    <property type="match status" value="1"/>
</dbReference>
<dbReference type="PROSITE" id="PS01223">
    <property type="entry name" value="PROA"/>
    <property type="match status" value="1"/>
</dbReference>
<protein>
    <recommendedName>
        <fullName evidence="1">Gamma-glutamyl phosphate reductase</fullName>
        <shortName evidence="1">GPR</shortName>
        <ecNumber evidence="1">1.2.1.41</ecNumber>
    </recommendedName>
    <alternativeName>
        <fullName evidence="1">Glutamate-5-semialdehyde dehydrogenase</fullName>
    </alternativeName>
    <alternativeName>
        <fullName evidence="1">Glutamyl-gamma-semialdehyde dehydrogenase</fullName>
        <shortName evidence="1">GSA dehydrogenase</shortName>
    </alternativeName>
</protein>
<evidence type="ECO:0000255" key="1">
    <source>
        <dbReference type="HAMAP-Rule" id="MF_00412"/>
    </source>
</evidence>
<organism>
    <name type="scientific">Chlorobium phaeobacteroides (strain BS1)</name>
    <dbReference type="NCBI Taxonomy" id="331678"/>
    <lineage>
        <taxon>Bacteria</taxon>
        <taxon>Pseudomonadati</taxon>
        <taxon>Chlorobiota</taxon>
        <taxon>Chlorobiia</taxon>
        <taxon>Chlorobiales</taxon>
        <taxon>Chlorobiaceae</taxon>
        <taxon>Chlorobium/Pelodictyon group</taxon>
        <taxon>Chlorobium</taxon>
    </lineage>
</organism>
<name>PROA_CHLPB</name>
<sequence length="417" mass="45854">MKETIYKQLEKVREASRKLCTLSDSDINSLLNDLANRIPGNSQTILEANQKDLDRMDPNDPKYDRLLLSTSRLESIASDIRNVAELPTPVGRILEKRTLPNGLALKKTTVPLGVVGIIYESRPNVTFDVFALCLKSGNATVLKGGSDAMYSNMAIVDLIREVLVRNNVNPDTLYLLPSDREAAGIMLNAVGYIDVIIPRGSQQLIDFARKSSSVPVIETGAGIVHTYFDLSGDLQMGKEIVFNAKTRRPSVCNALDTLLIHRERLDDLASIAEPLAEKKVIIFADKDAYPALLSRYPSELLQKAEEKHFGTEFLSLKMSVKTVDSLEDALKHIARFSSMHSEAVIASDAVVKDEFLKRVDAAVVYANTSTAFTDGAQFGLGAEIGISTQKLHARGPMALQELTSYKWVIEGDGQTRA</sequence>
<reference key="1">
    <citation type="submission" date="2008-06" db="EMBL/GenBank/DDBJ databases">
        <title>Complete sequence of Chlorobium phaeobacteroides BS1.</title>
        <authorList>
            <consortium name="US DOE Joint Genome Institute"/>
            <person name="Lucas S."/>
            <person name="Copeland A."/>
            <person name="Lapidus A."/>
            <person name="Glavina del Rio T."/>
            <person name="Dalin E."/>
            <person name="Tice H."/>
            <person name="Bruce D."/>
            <person name="Goodwin L."/>
            <person name="Pitluck S."/>
            <person name="Schmutz J."/>
            <person name="Larimer F."/>
            <person name="Land M."/>
            <person name="Hauser L."/>
            <person name="Kyrpides N."/>
            <person name="Ovchinnikova G."/>
            <person name="Li T."/>
            <person name="Liu Z."/>
            <person name="Zhao F."/>
            <person name="Overmann J."/>
            <person name="Bryant D.A."/>
            <person name="Richardson P."/>
        </authorList>
    </citation>
    <scope>NUCLEOTIDE SEQUENCE [LARGE SCALE GENOMIC DNA]</scope>
    <source>
        <strain>BS1</strain>
    </source>
</reference>
<gene>
    <name evidence="1" type="primary">proA</name>
    <name type="ordered locus">Cphamn1_0861</name>
</gene>
<comment type="function">
    <text evidence="1">Catalyzes the NADPH-dependent reduction of L-glutamate 5-phosphate into L-glutamate 5-semialdehyde and phosphate. The product spontaneously undergoes cyclization to form 1-pyrroline-5-carboxylate.</text>
</comment>
<comment type="catalytic activity">
    <reaction evidence="1">
        <text>L-glutamate 5-semialdehyde + phosphate + NADP(+) = L-glutamyl 5-phosphate + NADPH + H(+)</text>
        <dbReference type="Rhea" id="RHEA:19541"/>
        <dbReference type="ChEBI" id="CHEBI:15378"/>
        <dbReference type="ChEBI" id="CHEBI:43474"/>
        <dbReference type="ChEBI" id="CHEBI:57783"/>
        <dbReference type="ChEBI" id="CHEBI:58066"/>
        <dbReference type="ChEBI" id="CHEBI:58274"/>
        <dbReference type="ChEBI" id="CHEBI:58349"/>
        <dbReference type="EC" id="1.2.1.41"/>
    </reaction>
</comment>
<comment type="pathway">
    <text evidence="1">Amino-acid biosynthesis; L-proline biosynthesis; L-glutamate 5-semialdehyde from L-glutamate: step 2/2.</text>
</comment>
<comment type="subcellular location">
    <subcellularLocation>
        <location evidence="1">Cytoplasm</location>
    </subcellularLocation>
</comment>
<comment type="similarity">
    <text evidence="1">Belongs to the gamma-glutamyl phosphate reductase family.</text>
</comment>
<feature type="chain" id="PRO_1000193584" description="Gamma-glutamyl phosphate reductase">
    <location>
        <begin position="1"/>
        <end position="417"/>
    </location>
</feature>